<reference evidence="3" key="1">
    <citation type="journal article" date="2003" name="Allergy">
        <title>Immunochemical characterization of Russian thistle (Salsola kali) pollen extracts. Purification of the allergen Sal k 1.</title>
        <authorList>
            <person name="Carnes J."/>
            <person name="Fernandez-Caldas E."/>
            <person name="Marina A."/>
            <person name="Alonso C."/>
            <person name="Lahoz C."/>
            <person name="Colas C."/>
            <person name="Lezaun A."/>
        </authorList>
    </citation>
    <scope>PROTEIN SEQUENCE</scope>
    <scope>ALLERGEN</scope>
    <source>
        <tissue evidence="1">Pollen</tissue>
    </source>
</reference>
<organism>
    <name type="scientific">Kali turgidum</name>
    <name type="common">Prickly saltwort</name>
    <name type="synonym">Salsola kali</name>
    <dbReference type="NCBI Taxonomy" id="151250"/>
    <lineage>
        <taxon>Eukaryota</taxon>
        <taxon>Viridiplantae</taxon>
        <taxon>Streptophyta</taxon>
        <taxon>Embryophyta</taxon>
        <taxon>Tracheophyta</taxon>
        <taxon>Spermatophyta</taxon>
        <taxon>Magnoliopsida</taxon>
        <taxon>eudicotyledons</taxon>
        <taxon>Gunneridae</taxon>
        <taxon>Pentapetalae</taxon>
        <taxon>Caryophyllales</taxon>
        <taxon>Chenopodiaceae</taxon>
        <taxon>Salsoloideae</taxon>
        <taxon>Salsoleae</taxon>
        <taxon>Kali</taxon>
    </lineage>
</organism>
<feature type="chain" id="PRO_0000058503" description="Pollen allergen Sal k 1">
    <location>
        <begin position="1" status="less than"/>
        <end position="42" status="greater than"/>
    </location>
</feature>
<feature type="non-consecutive residues" evidence="2">
    <location>
        <begin position="11"/>
        <end position="12"/>
    </location>
</feature>
<feature type="non-consecutive residues" evidence="2">
    <location>
        <begin position="19"/>
        <end position="20"/>
    </location>
</feature>
<feature type="non-consecutive residues" evidence="2">
    <location>
        <begin position="28"/>
        <end position="29"/>
    </location>
</feature>
<feature type="non-terminal residue" evidence="2">
    <location>
        <position position="1"/>
    </location>
</feature>
<feature type="non-terminal residue">
    <location>
        <position position="42"/>
    </location>
</feature>
<accession>P83181</accession>
<keyword id="KW-0020">Allergen</keyword>
<keyword id="KW-0903">Direct protein sequencing</keyword>
<comment type="allergen">
    <text evidence="1">Causes an allergic reaction in human. Binds to IgE.</text>
</comment>
<comment type="caution">
    <text evidence="3">The order of the peptides shown is unknown.</text>
</comment>
<evidence type="ECO:0000269" key="1">
    <source>
    </source>
</evidence>
<evidence type="ECO:0000303" key="2">
    <source>
    </source>
</evidence>
<evidence type="ECO:0000305" key="3"/>
<sequence length="42" mass="4654">PTITIGGPEYRTIFFDAYLGTSYVIVIKEPAEEFTTISDAVK</sequence>
<protein>
    <recommendedName>
        <fullName evidence="2">Pollen allergen Sal k 1</fullName>
    </recommendedName>
    <allergenName evidence="2">Sal k 1</allergenName>
</protein>
<proteinExistence type="evidence at protein level"/>
<dbReference type="Allergome" id="3348">
    <property type="allergen name" value="Sal k 1"/>
</dbReference>
<dbReference type="Allergome" id="3774">
    <property type="allergen name" value="Sal k 1.0101"/>
</dbReference>
<name>POA1_KALTU</name>